<protein>
    <recommendedName>
        <fullName evidence="17">Exostosin-like 3</fullName>
        <ecNumber evidence="5 14 21 22">2.4.1.223</ecNumber>
    </recommendedName>
    <alternativeName>
        <fullName evidence="16">EXT-related protein 1</fullName>
    </alternativeName>
    <alternativeName>
        <fullName>Glucuronyl-galactosyl-proteoglycan 4-alpha-N-acetylglucosaminyltransferase</fullName>
    </alternativeName>
    <alternativeName>
        <fullName evidence="19">Hereditary multiple exostoses gene isolog</fullName>
    </alternativeName>
    <alternativeName>
        <fullName evidence="18">Multiple exostosis-like protein 3</fullName>
    </alternativeName>
    <alternativeName>
        <fullName evidence="17">Putative tumor suppressor protein EXTL3</fullName>
    </alternativeName>
</protein>
<feature type="chain" id="PRO_0000149657" description="Exostosin-like 3">
    <location>
        <begin position="1"/>
        <end position="919"/>
    </location>
</feature>
<feature type="topological domain" description="Cytoplasmic" evidence="3">
    <location>
        <begin position="1"/>
        <end position="30"/>
    </location>
</feature>
<feature type="transmembrane region" description="Helical; Signal-anchor for type II membrane protein" evidence="3">
    <location>
        <begin position="31"/>
        <end position="51"/>
    </location>
</feature>
<feature type="topological domain" description="Lumenal" evidence="3">
    <location>
        <begin position="52"/>
        <end position="919"/>
    </location>
</feature>
<feature type="region of interest" description="Required for interaction with REG3A" evidence="8">
    <location>
        <begin position="1"/>
        <end position="140"/>
    </location>
</feature>
<feature type="active site" evidence="1">
    <location>
        <position position="833"/>
    </location>
</feature>
<feature type="binding site" evidence="14 26">
    <location>
        <position position="668"/>
    </location>
    <ligand>
        <name>UDP-N-acetyl-alpha-D-glucosamine</name>
        <dbReference type="ChEBI" id="CHEBI:57705"/>
    </ligand>
</feature>
<feature type="binding site" evidence="14 26">
    <location>
        <position position="672"/>
    </location>
    <ligand>
        <name>UDP-N-acetyl-alpha-D-glucosamine</name>
        <dbReference type="ChEBI" id="CHEBI:57705"/>
    </ligand>
</feature>
<feature type="binding site" evidence="14 26">
    <location>
        <position position="697"/>
    </location>
    <ligand>
        <name>UDP-N-acetyl-alpha-D-glucosamine</name>
        <dbReference type="ChEBI" id="CHEBI:57705"/>
    </ligand>
</feature>
<feature type="binding site" evidence="1">
    <location>
        <position position="723"/>
    </location>
    <ligand>
        <name>UDP-N-acetyl-alpha-D-glucosamine</name>
        <dbReference type="ChEBI" id="CHEBI:57705"/>
    </ligand>
</feature>
<feature type="binding site" evidence="1">
    <location>
        <position position="728"/>
    </location>
    <ligand>
        <name>UDP-N-acetyl-alpha-D-glucosamine</name>
        <dbReference type="ChEBI" id="CHEBI:57705"/>
    </ligand>
</feature>
<feature type="binding site" evidence="1">
    <location>
        <position position="744"/>
    </location>
    <ligand>
        <name>UDP-N-acetyl-alpha-D-glucosamine</name>
        <dbReference type="ChEBI" id="CHEBI:57705"/>
    </ligand>
</feature>
<feature type="binding site" evidence="1">
    <location>
        <position position="745"/>
    </location>
    <ligand>
        <name>UDP-N-acetyl-alpha-D-glucosamine</name>
        <dbReference type="ChEBI" id="CHEBI:57705"/>
    </ligand>
</feature>
<feature type="binding site" evidence="14 26">
    <location>
        <position position="746"/>
    </location>
    <ligand>
        <name>Mn(2+)</name>
        <dbReference type="ChEBI" id="CHEBI:29035"/>
        <note>catalytic</note>
    </ligand>
</feature>
<feature type="binding site" evidence="14 26">
    <location>
        <position position="746"/>
    </location>
    <ligand>
        <name>UDP-N-acetyl-alpha-D-glucosamine</name>
        <dbReference type="ChEBI" id="CHEBI:57705"/>
    </ligand>
</feature>
<feature type="binding site" evidence="1">
    <location>
        <position position="832"/>
    </location>
    <ligand>
        <name>UDP-N-acetyl-alpha-D-glucosamine</name>
        <dbReference type="ChEBI" id="CHEBI:57705"/>
    </ligand>
</feature>
<feature type="binding site" evidence="1">
    <location>
        <position position="833"/>
    </location>
    <ligand>
        <name>UDP-N-acetyl-alpha-D-glucosamine</name>
        <dbReference type="ChEBI" id="CHEBI:57705"/>
    </ligand>
</feature>
<feature type="binding site" evidence="1">
    <location>
        <position position="876"/>
    </location>
    <ligand>
        <name>UDP-N-acetyl-alpha-D-glucosamine</name>
        <dbReference type="ChEBI" id="CHEBI:57705"/>
    </ligand>
</feature>
<feature type="site" description="Not glycosylated" evidence="12">
    <location>
        <position position="277"/>
    </location>
</feature>
<feature type="modified residue" description="Phosphoserine" evidence="2">
    <location>
        <position position="362"/>
    </location>
</feature>
<feature type="glycosylation site" description="N-linked (GlcNAc...) asparagine" evidence="12">
    <location>
        <position position="290"/>
    </location>
</feature>
<feature type="glycosylation site" description="N-linked (GlcNAc...) asparagine" evidence="12 14 24 25">
    <location>
        <position position="592"/>
    </location>
</feature>
<feature type="glycosylation site" description="N-linked (GlcNAc...) asparagine" evidence="14 24 25">
    <location>
        <position position="790"/>
    </location>
</feature>
<feature type="disulfide bond" evidence="14 25 26">
    <location>
        <begin position="177"/>
        <end position="182"/>
    </location>
</feature>
<feature type="disulfide bond" evidence="14 25 26">
    <location>
        <begin position="188"/>
        <end position="236"/>
    </location>
</feature>
<feature type="disulfide bond" evidence="14 25 26">
    <location>
        <begin position="400"/>
        <end position="415"/>
    </location>
</feature>
<feature type="disulfide bond" description="Interchain (with C-915)" evidence="14 25 26">
    <location>
        <position position="793"/>
    </location>
</feature>
<feature type="disulfide bond" evidence="14 25 26">
    <location>
        <begin position="831"/>
        <end position="879"/>
    </location>
</feature>
<feature type="disulfide bond" description="Interchain (with C-793)" evidence="14 25 26">
    <location>
        <position position="915"/>
    </location>
</feature>
<feature type="sequence variant" id="VAR_079089" description="In ISDNA; changed glycosaminoglycan synthesis; dbSNP:rs747676107." evidence="10">
    <original>R</original>
    <variation>W</variation>
    <location>
        <position position="339"/>
    </location>
</feature>
<feature type="sequence variant" id="VAR_079090" description="In dbSNP:rs116659770." evidence="9">
    <original>V</original>
    <variation>L</variation>
    <location>
        <position position="442"/>
    </location>
</feature>
<feature type="sequence variant" id="VAR_079091" description="In ISDNA; changed glycosaminoglycan synthesis; dbSNP:rs554294508." evidence="9 10">
    <original>P</original>
    <variation>L</variation>
    <location>
        <position position="461"/>
    </location>
</feature>
<feature type="sequence variant" id="VAR_079092" description="In ISDNA; changed glycosaminoglycan synthesis; no localization to Golgi apparatus in patient fibroblasts; dbSNP:rs1332006145." evidence="9">
    <original>R</original>
    <variation>C</variation>
    <location>
        <position position="513"/>
    </location>
</feature>
<feature type="sequence variant" id="VAR_061194" description="In dbSNP:rs35781576.">
    <original>A</original>
    <variation>V</variation>
    <location>
        <position position="550"/>
    </location>
</feature>
<feature type="sequence variant" id="VAR_080762" description="Found in a small consanguineous family with intellectual disability; uncertain significance." evidence="11">
    <original>S</original>
    <variation>C</variation>
    <location>
        <position position="646"/>
    </location>
</feature>
<feature type="sequence variant" id="VAR_079093" description="In ISDNA; changed glycosaminoglycan synthesis; dbSNP:rs770842408." evidence="9">
    <original>N</original>
    <variation>S</variation>
    <location>
        <position position="657"/>
    </location>
</feature>
<feature type="sequence variant" id="VAR_079094" description="In ISDNA; changed glycosaminoglycan synthesis." evidence="9">
    <original>Y</original>
    <variation>D</variation>
    <location>
        <position position="670"/>
    </location>
</feature>
<feature type="sequence variant" id="VAR_049229" description="In dbSNP:rs2269452.">
    <original>L</original>
    <variation>P</variation>
    <location>
        <position position="706"/>
    </location>
</feature>
<feature type="helix" evidence="29">
    <location>
        <begin position="171"/>
        <end position="174"/>
    </location>
</feature>
<feature type="helix" evidence="29">
    <location>
        <begin position="179"/>
        <end position="182"/>
    </location>
</feature>
<feature type="helix" evidence="29">
    <location>
        <begin position="185"/>
        <end position="187"/>
    </location>
</feature>
<feature type="strand" evidence="27">
    <location>
        <begin position="190"/>
        <end position="192"/>
    </location>
</feature>
<feature type="strand" evidence="29">
    <location>
        <begin position="196"/>
        <end position="198"/>
    </location>
</feature>
<feature type="helix" evidence="29">
    <location>
        <begin position="201"/>
        <end position="203"/>
    </location>
</feature>
<feature type="helix" evidence="29">
    <location>
        <begin position="206"/>
        <end position="209"/>
    </location>
</feature>
<feature type="helix" evidence="29">
    <location>
        <begin position="212"/>
        <end position="223"/>
    </location>
</feature>
<feature type="strand" evidence="28">
    <location>
        <begin position="226"/>
        <end position="228"/>
    </location>
</feature>
<feature type="helix" evidence="29">
    <location>
        <begin position="232"/>
        <end position="234"/>
    </location>
</feature>
<feature type="strand" evidence="29">
    <location>
        <begin position="236"/>
        <end position="243"/>
    </location>
</feature>
<feature type="helix" evidence="29">
    <location>
        <begin position="253"/>
        <end position="261"/>
    </location>
</feature>
<feature type="turn" evidence="29">
    <location>
        <begin position="267"/>
        <end position="269"/>
    </location>
</feature>
<feature type="strand" evidence="29">
    <location>
        <begin position="273"/>
        <end position="277"/>
    </location>
</feature>
<feature type="turn" evidence="29">
    <location>
        <begin position="287"/>
        <end position="290"/>
    </location>
</feature>
<feature type="strand" evidence="29">
    <location>
        <begin position="297"/>
        <end position="301"/>
    </location>
</feature>
<feature type="turn" evidence="29">
    <location>
        <begin position="305"/>
        <end position="307"/>
    </location>
</feature>
<feature type="turn" evidence="29">
    <location>
        <begin position="310"/>
        <end position="312"/>
    </location>
</feature>
<feature type="strand" evidence="29">
    <location>
        <begin position="313"/>
        <end position="315"/>
    </location>
</feature>
<feature type="helix" evidence="29">
    <location>
        <begin position="328"/>
        <end position="330"/>
    </location>
</feature>
<feature type="strand" evidence="29">
    <location>
        <begin position="336"/>
        <end position="338"/>
    </location>
</feature>
<feature type="strand" evidence="29">
    <location>
        <begin position="340"/>
        <end position="346"/>
    </location>
</feature>
<feature type="helix" evidence="29">
    <location>
        <begin position="376"/>
        <end position="389"/>
    </location>
</feature>
<feature type="strand" evidence="29">
    <location>
        <begin position="394"/>
        <end position="399"/>
    </location>
</feature>
<feature type="helix" evidence="29">
    <location>
        <begin position="418"/>
        <end position="425"/>
    </location>
</feature>
<feature type="strand" evidence="29">
    <location>
        <begin position="428"/>
        <end position="434"/>
    </location>
</feature>
<feature type="strand" evidence="29">
    <location>
        <begin position="441"/>
        <end position="443"/>
    </location>
</feature>
<feature type="helix" evidence="29">
    <location>
        <begin position="445"/>
        <end position="456"/>
    </location>
</feature>
<feature type="strand" evidence="29">
    <location>
        <begin position="460"/>
        <end position="464"/>
    </location>
</feature>
<feature type="turn" evidence="29">
    <location>
        <begin position="471"/>
        <end position="475"/>
    </location>
</feature>
<feature type="helix" evidence="29">
    <location>
        <begin position="478"/>
        <end position="480"/>
    </location>
</feature>
<feature type="strand" evidence="29">
    <location>
        <begin position="483"/>
        <end position="485"/>
    </location>
</feature>
<feature type="helix" evidence="29">
    <location>
        <begin position="487"/>
        <end position="492"/>
    </location>
</feature>
<feature type="helix" evidence="29">
    <location>
        <begin position="493"/>
        <end position="499"/>
    </location>
</feature>
<feature type="helix" evidence="29">
    <location>
        <begin position="502"/>
        <end position="519"/>
    </location>
</feature>
<feature type="helix" evidence="29">
    <location>
        <begin position="523"/>
        <end position="537"/>
    </location>
</feature>
<feature type="helix" evidence="29">
    <location>
        <begin position="592"/>
        <end position="596"/>
    </location>
</feature>
<feature type="turn" evidence="29">
    <location>
        <begin position="597"/>
        <end position="599"/>
    </location>
</feature>
<feature type="helix" evidence="29">
    <location>
        <begin position="600"/>
        <end position="605"/>
    </location>
</feature>
<feature type="strand" evidence="28">
    <location>
        <begin position="606"/>
        <end position="608"/>
    </location>
</feature>
<feature type="helix" evidence="29">
    <location>
        <begin position="627"/>
        <end position="629"/>
    </location>
</feature>
<feature type="helix" evidence="29">
    <location>
        <begin position="639"/>
        <end position="642"/>
    </location>
</feature>
<feature type="helix" evidence="29">
    <location>
        <begin position="647"/>
        <end position="651"/>
    </location>
</feature>
<feature type="strand" evidence="29">
    <location>
        <begin position="656"/>
        <end position="658"/>
    </location>
</feature>
<feature type="strand" evidence="29">
    <location>
        <begin position="663"/>
        <end position="671"/>
    </location>
</feature>
<feature type="helix" evidence="29">
    <location>
        <begin position="673"/>
        <end position="681"/>
    </location>
</feature>
<feature type="turn" evidence="29">
    <location>
        <begin position="682"/>
        <end position="685"/>
    </location>
</feature>
<feature type="strand" evidence="29">
    <location>
        <begin position="689"/>
        <end position="696"/>
    </location>
</feature>
<feature type="strand" evidence="29">
    <location>
        <begin position="698"/>
        <end position="700"/>
    </location>
</feature>
<feature type="strand" evidence="29">
    <location>
        <begin position="715"/>
        <end position="719"/>
    </location>
</feature>
<feature type="helix" evidence="29">
    <location>
        <begin position="725"/>
        <end position="729"/>
    </location>
</feature>
<feature type="strand" evidence="29">
    <location>
        <begin position="737"/>
        <end position="744"/>
    </location>
</feature>
<feature type="helix" evidence="29">
    <location>
        <begin position="751"/>
        <end position="762"/>
    </location>
</feature>
<feature type="strand" evidence="29">
    <location>
        <begin position="769"/>
        <end position="771"/>
    </location>
</feature>
<feature type="strand" evidence="29">
    <location>
        <begin position="773"/>
        <end position="779"/>
    </location>
</feature>
<feature type="turn" evidence="29">
    <location>
        <begin position="780"/>
        <end position="783"/>
    </location>
</feature>
<feature type="strand" evidence="29">
    <location>
        <begin position="784"/>
        <end position="788"/>
    </location>
</feature>
<feature type="strand" evidence="29">
    <location>
        <begin position="802"/>
        <end position="806"/>
    </location>
</feature>
<feature type="helix" evidence="29">
    <location>
        <begin position="807"/>
        <end position="815"/>
    </location>
</feature>
<feature type="helix" evidence="29">
    <location>
        <begin position="819"/>
        <end position="828"/>
    </location>
</feature>
<feature type="helix" evidence="29">
    <location>
        <begin position="832"/>
        <end position="844"/>
    </location>
</feature>
<feature type="strand" evidence="29">
    <location>
        <begin position="849"/>
        <end position="853"/>
    </location>
</feature>
<feature type="helix" evidence="29">
    <location>
        <begin position="870"/>
        <end position="887"/>
    </location>
</feature>
<feature type="strand" evidence="30">
    <location>
        <begin position="898"/>
        <end position="900"/>
    </location>
</feature>
<feature type="turn" evidence="29">
    <location>
        <begin position="902"/>
        <end position="905"/>
    </location>
</feature>
<feature type="strand" evidence="29">
    <location>
        <begin position="915"/>
        <end position="917"/>
    </location>
</feature>
<dbReference type="EC" id="2.4.1.223" evidence="5 14 21 22"/>
<dbReference type="EMBL" id="AF001690">
    <property type="protein sequence ID" value="AAC39598.1"/>
    <property type="molecule type" value="mRNA"/>
</dbReference>
<dbReference type="EMBL" id="U76188">
    <property type="protein sequence ID" value="AAB93670.1"/>
    <property type="molecule type" value="mRNA"/>
</dbReference>
<dbReference type="EMBL" id="AB007042">
    <property type="protein sequence ID" value="BAA24080.1"/>
    <property type="molecule type" value="mRNA"/>
</dbReference>
<dbReference type="EMBL" id="AB011091">
    <property type="protein sequence ID" value="BAA25445.2"/>
    <property type="status" value="ALT_INIT"/>
    <property type="molecule type" value="mRNA"/>
</dbReference>
<dbReference type="EMBL" id="AF029231">
    <property type="protein sequence ID" value="AAD01877.1"/>
    <property type="molecule type" value="mRNA"/>
</dbReference>
<dbReference type="EMBL" id="AF083551">
    <property type="protein sequence ID" value="AAD42041.1"/>
    <property type="molecule type" value="mRNA"/>
</dbReference>
<dbReference type="EMBL" id="BT007353">
    <property type="protein sequence ID" value="AAP36017.1"/>
    <property type="molecule type" value="mRNA"/>
</dbReference>
<dbReference type="EMBL" id="CH471080">
    <property type="protein sequence ID" value="EAW63507.1"/>
    <property type="molecule type" value="Genomic_DNA"/>
</dbReference>
<dbReference type="EMBL" id="CH471080">
    <property type="protein sequence ID" value="EAW63508.1"/>
    <property type="molecule type" value="Genomic_DNA"/>
</dbReference>
<dbReference type="EMBL" id="CH471080">
    <property type="protein sequence ID" value="EAW63509.1"/>
    <property type="molecule type" value="Genomic_DNA"/>
</dbReference>
<dbReference type="EMBL" id="BC006363">
    <property type="protein sequence ID" value="AAH06363.1"/>
    <property type="molecule type" value="mRNA"/>
</dbReference>
<dbReference type="EMBL" id="U96629">
    <property type="protein sequence ID" value="AAB67602.1"/>
    <property type="status" value="ALT_SEQ"/>
    <property type="molecule type" value="Genomic_DNA"/>
</dbReference>
<dbReference type="CCDS" id="CCDS6070.1"/>
<dbReference type="PIR" id="JC5934">
    <property type="entry name" value="JC5934"/>
</dbReference>
<dbReference type="RefSeq" id="NP_001431.1">
    <property type="nucleotide sequence ID" value="NM_001440.4"/>
</dbReference>
<dbReference type="RefSeq" id="XP_011542742.1">
    <property type="nucleotide sequence ID" value="XM_011544440.4"/>
</dbReference>
<dbReference type="RefSeq" id="XP_024302862.1">
    <property type="nucleotide sequence ID" value="XM_024447094.2"/>
</dbReference>
<dbReference type="RefSeq" id="XP_024302864.1">
    <property type="nucleotide sequence ID" value="XM_024447096.2"/>
</dbReference>
<dbReference type="RefSeq" id="XP_047277470.1">
    <property type="nucleotide sequence ID" value="XM_047421514.1"/>
</dbReference>
<dbReference type="RefSeq" id="XP_047277471.1">
    <property type="nucleotide sequence ID" value="XM_047421515.1"/>
</dbReference>
<dbReference type="RefSeq" id="XP_047277472.1">
    <property type="nucleotide sequence ID" value="XM_047421516.1"/>
</dbReference>
<dbReference type="RefSeq" id="XP_047277473.1">
    <property type="nucleotide sequence ID" value="XM_047421517.1"/>
</dbReference>
<dbReference type="RefSeq" id="XP_047277474.1">
    <property type="nucleotide sequence ID" value="XM_047421518.1"/>
</dbReference>
<dbReference type="RefSeq" id="XP_054216003.1">
    <property type="nucleotide sequence ID" value="XM_054360028.1"/>
</dbReference>
<dbReference type="RefSeq" id="XP_054216004.1">
    <property type="nucleotide sequence ID" value="XM_054360029.1"/>
</dbReference>
<dbReference type="RefSeq" id="XP_054216005.1">
    <property type="nucleotide sequence ID" value="XM_054360030.1"/>
</dbReference>
<dbReference type="RefSeq" id="XP_054216006.1">
    <property type="nucleotide sequence ID" value="XM_054360031.1"/>
</dbReference>
<dbReference type="RefSeq" id="XP_054216007.1">
    <property type="nucleotide sequence ID" value="XM_054360032.1"/>
</dbReference>
<dbReference type="RefSeq" id="XP_054216008.1">
    <property type="nucleotide sequence ID" value="XM_054360033.1"/>
</dbReference>
<dbReference type="RefSeq" id="XP_054216009.1">
    <property type="nucleotide sequence ID" value="XM_054360034.1"/>
</dbReference>
<dbReference type="RefSeq" id="XP_054216010.1">
    <property type="nucleotide sequence ID" value="XM_054360035.1"/>
</dbReference>
<dbReference type="PDB" id="7AU2">
    <property type="method" value="EM"/>
    <property type="resolution" value="2.43 A"/>
    <property type="chains" value="A/B=51-919"/>
</dbReference>
<dbReference type="PDB" id="7AUA">
    <property type="method" value="EM"/>
    <property type="resolution" value="2.93 A"/>
    <property type="chains" value="A/B=51-919"/>
</dbReference>
<dbReference type="PDB" id="8OG1">
    <property type="method" value="X-ray"/>
    <property type="resolution" value="1.58 A"/>
    <property type="chains" value="A=52-919"/>
</dbReference>
<dbReference type="PDB" id="8OG4">
    <property type="method" value="X-ray"/>
    <property type="resolution" value="2.10 A"/>
    <property type="chains" value="A/B=52-919"/>
</dbReference>
<dbReference type="PDBsum" id="7AU2"/>
<dbReference type="PDBsum" id="7AUA"/>
<dbReference type="PDBsum" id="8OG1"/>
<dbReference type="PDBsum" id="8OG4"/>
<dbReference type="EMDB" id="EMD-11923"/>
<dbReference type="EMDB" id="EMD-11926"/>
<dbReference type="SMR" id="O43909"/>
<dbReference type="BioGRID" id="108438">
    <property type="interactions" value="137"/>
</dbReference>
<dbReference type="FunCoup" id="O43909">
    <property type="interactions" value="2183"/>
</dbReference>
<dbReference type="IntAct" id="O43909">
    <property type="interactions" value="103"/>
</dbReference>
<dbReference type="MINT" id="O43909"/>
<dbReference type="STRING" id="9606.ENSP00000220562"/>
<dbReference type="CAZy" id="GT47">
    <property type="family name" value="Glycosyltransferase Family 47"/>
</dbReference>
<dbReference type="CAZy" id="GT64">
    <property type="family name" value="Glycosyltransferase Family 64"/>
</dbReference>
<dbReference type="GlyCosmos" id="O43909">
    <property type="glycosylation" value="5 sites, 1 glycan"/>
</dbReference>
<dbReference type="GlyGen" id="O43909">
    <property type="glycosylation" value="9 sites, 2 N-linked glycans (3 sites), 3 O-linked glycans (5 sites)"/>
</dbReference>
<dbReference type="iPTMnet" id="O43909"/>
<dbReference type="PhosphoSitePlus" id="O43909"/>
<dbReference type="SwissPalm" id="O43909"/>
<dbReference type="BioMuta" id="EXTL3"/>
<dbReference type="jPOST" id="O43909"/>
<dbReference type="MassIVE" id="O43909"/>
<dbReference type="PaxDb" id="9606-ENSP00000220562"/>
<dbReference type="PeptideAtlas" id="O43909"/>
<dbReference type="ProteomicsDB" id="49226"/>
<dbReference type="Pumba" id="O43909"/>
<dbReference type="Antibodypedia" id="23127">
    <property type="antibodies" value="274 antibodies from 29 providers"/>
</dbReference>
<dbReference type="DNASU" id="2137"/>
<dbReference type="Ensembl" id="ENST00000220562.9">
    <property type="protein sequence ID" value="ENSP00000220562.4"/>
    <property type="gene ID" value="ENSG00000012232.10"/>
</dbReference>
<dbReference type="Ensembl" id="ENST00000696177.1">
    <property type="protein sequence ID" value="ENSP00000512467.1"/>
    <property type="gene ID" value="ENSG00000012232.10"/>
</dbReference>
<dbReference type="Ensembl" id="ENST00000696178.1">
    <property type="protein sequence ID" value="ENSP00000512468.1"/>
    <property type="gene ID" value="ENSG00000012232.10"/>
</dbReference>
<dbReference type="Ensembl" id="ENST00000696184.1">
    <property type="protein sequence ID" value="ENSP00000512473.1"/>
    <property type="gene ID" value="ENSG00000012232.10"/>
</dbReference>
<dbReference type="Ensembl" id="ENST00000696186.1">
    <property type="protein sequence ID" value="ENSP00000512474.1"/>
    <property type="gene ID" value="ENSG00000012232.10"/>
</dbReference>
<dbReference type="GeneID" id="2137"/>
<dbReference type="KEGG" id="hsa:2137"/>
<dbReference type="MANE-Select" id="ENST00000220562.9">
    <property type="protein sequence ID" value="ENSP00000220562.4"/>
    <property type="RefSeq nucleotide sequence ID" value="NM_001440.4"/>
    <property type="RefSeq protein sequence ID" value="NP_001431.1"/>
</dbReference>
<dbReference type="UCSC" id="uc003xgz.3">
    <property type="organism name" value="human"/>
</dbReference>
<dbReference type="AGR" id="HGNC:3518"/>
<dbReference type="CTD" id="2137"/>
<dbReference type="DisGeNET" id="2137"/>
<dbReference type="GeneCards" id="EXTL3"/>
<dbReference type="HGNC" id="HGNC:3518">
    <property type="gene designation" value="EXTL3"/>
</dbReference>
<dbReference type="HPA" id="ENSG00000012232">
    <property type="expression patterns" value="Low tissue specificity"/>
</dbReference>
<dbReference type="MalaCards" id="EXTL3"/>
<dbReference type="MIM" id="605744">
    <property type="type" value="gene"/>
</dbReference>
<dbReference type="MIM" id="617425">
    <property type="type" value="phenotype"/>
</dbReference>
<dbReference type="neXtProt" id="NX_O43909"/>
<dbReference type="OpenTargets" id="ENSG00000012232"/>
<dbReference type="Orphanet" id="508533">
    <property type="disease" value="Skeletal dysplasia-T-cell immunodeficiency-developmental delay syndrome"/>
</dbReference>
<dbReference type="PharmGKB" id="PA27930"/>
<dbReference type="VEuPathDB" id="HostDB:ENSG00000012232"/>
<dbReference type="eggNOG" id="KOG2264">
    <property type="taxonomic scope" value="Eukaryota"/>
</dbReference>
<dbReference type="GeneTree" id="ENSGT00940000156692"/>
<dbReference type="HOGENOM" id="CLU_013906_3_0_1"/>
<dbReference type="InParanoid" id="O43909"/>
<dbReference type="OMA" id="KFMGSHT"/>
<dbReference type="OrthoDB" id="5954868at2759"/>
<dbReference type="PAN-GO" id="O43909">
    <property type="GO annotations" value="2 GO annotations based on evolutionary models"/>
</dbReference>
<dbReference type="PhylomeDB" id="O43909"/>
<dbReference type="TreeFam" id="TF314231"/>
<dbReference type="BioCyc" id="MetaCyc:HS00333-MONOMER"/>
<dbReference type="BRENDA" id="2.4.1.223">
    <property type="organism ID" value="2681"/>
</dbReference>
<dbReference type="PathwayCommons" id="O43909"/>
<dbReference type="Reactome" id="R-HSA-381038">
    <property type="pathway name" value="XBP1(S) activates chaperone genes"/>
</dbReference>
<dbReference type="SignaLink" id="O43909"/>
<dbReference type="UniPathway" id="UPA00756"/>
<dbReference type="BioGRID-ORCS" id="2137">
    <property type="hits" value="102 hits in 1172 CRISPR screens"/>
</dbReference>
<dbReference type="ChiTaRS" id="EXTL3">
    <property type="organism name" value="human"/>
</dbReference>
<dbReference type="GeneWiki" id="EXTL3"/>
<dbReference type="GenomeRNAi" id="2137"/>
<dbReference type="Pharos" id="O43909">
    <property type="development level" value="Tbio"/>
</dbReference>
<dbReference type="PRO" id="PR:O43909"/>
<dbReference type="Proteomes" id="UP000005640">
    <property type="component" value="Chromosome 8"/>
</dbReference>
<dbReference type="RNAct" id="O43909">
    <property type="molecule type" value="protein"/>
</dbReference>
<dbReference type="Bgee" id="ENSG00000012232">
    <property type="expression patterns" value="Expressed in stromal cell of endometrium and 140 other cell types or tissues"/>
</dbReference>
<dbReference type="ExpressionAtlas" id="O43909">
    <property type="expression patterns" value="baseline and differential"/>
</dbReference>
<dbReference type="GO" id="GO:0005783">
    <property type="term" value="C:endoplasmic reticulum"/>
    <property type="evidence" value="ECO:0000314"/>
    <property type="project" value="BHF-UCL"/>
</dbReference>
<dbReference type="GO" id="GO:0005789">
    <property type="term" value="C:endoplasmic reticulum membrane"/>
    <property type="evidence" value="ECO:0000304"/>
    <property type="project" value="Reactome"/>
</dbReference>
<dbReference type="GO" id="GO:0005794">
    <property type="term" value="C:Golgi apparatus"/>
    <property type="evidence" value="ECO:0000314"/>
    <property type="project" value="UniProtKB"/>
</dbReference>
<dbReference type="GO" id="GO:0005634">
    <property type="term" value="C:nucleus"/>
    <property type="evidence" value="ECO:0007669"/>
    <property type="project" value="UniProtKB-SubCell"/>
</dbReference>
<dbReference type="GO" id="GO:0005886">
    <property type="term" value="C:plasma membrane"/>
    <property type="evidence" value="ECO:0000314"/>
    <property type="project" value="UniProt"/>
</dbReference>
<dbReference type="GO" id="GO:0001888">
    <property type="term" value="F:glucuronyl-galactosyl-proteoglycan 4-alpha-N-acetylglucosaminyltransferase activity"/>
    <property type="evidence" value="ECO:0000314"/>
    <property type="project" value="UniProtKB"/>
</dbReference>
<dbReference type="GO" id="GO:0016757">
    <property type="term" value="F:glycosyltransferase activity"/>
    <property type="evidence" value="ECO:0000314"/>
    <property type="project" value="UniProtKB"/>
</dbReference>
<dbReference type="GO" id="GO:0000287">
    <property type="term" value="F:magnesium ion binding"/>
    <property type="evidence" value="ECO:0000314"/>
    <property type="project" value="UniProtKB"/>
</dbReference>
<dbReference type="GO" id="GO:0016500">
    <property type="term" value="F:protein-hormone receptor activity"/>
    <property type="evidence" value="ECO:0000314"/>
    <property type="project" value="UniProt"/>
</dbReference>
<dbReference type="GO" id="GO:0015012">
    <property type="term" value="P:heparan sulfate proteoglycan biosynthetic process"/>
    <property type="evidence" value="ECO:0000314"/>
    <property type="project" value="UniProtKB"/>
</dbReference>
<dbReference type="GO" id="GO:1900016">
    <property type="term" value="P:negative regulation of cytokine production involved in inflammatory response"/>
    <property type="evidence" value="ECO:0000250"/>
    <property type="project" value="UniProt"/>
</dbReference>
<dbReference type="GO" id="GO:0050728">
    <property type="term" value="P:negative regulation of inflammatory response"/>
    <property type="evidence" value="ECO:0000250"/>
    <property type="project" value="UniProt"/>
</dbReference>
<dbReference type="GO" id="GO:0106015">
    <property type="term" value="P:negative regulation of inflammatory response to wounding"/>
    <property type="evidence" value="ECO:0000314"/>
    <property type="project" value="UniProt"/>
</dbReference>
<dbReference type="GO" id="GO:0045617">
    <property type="term" value="P:negative regulation of keratinocyte differentiation"/>
    <property type="evidence" value="ECO:0000314"/>
    <property type="project" value="UniProt"/>
</dbReference>
<dbReference type="GO" id="GO:0030307">
    <property type="term" value="P:positive regulation of cell growth"/>
    <property type="evidence" value="ECO:0007669"/>
    <property type="project" value="Ensembl"/>
</dbReference>
<dbReference type="GO" id="GO:2000972">
    <property type="term" value="P:positive regulation of detection of glucose"/>
    <property type="evidence" value="ECO:0000250"/>
    <property type="project" value="UniProt"/>
</dbReference>
<dbReference type="GO" id="GO:0010838">
    <property type="term" value="P:positive regulation of keratinocyte proliferation"/>
    <property type="evidence" value="ECO:0000314"/>
    <property type="project" value="UniProt"/>
</dbReference>
<dbReference type="GO" id="GO:0051897">
    <property type="term" value="P:positive regulation of phosphatidylinositol 3-kinase/protein kinase B signal transduction"/>
    <property type="evidence" value="ECO:0000314"/>
    <property type="project" value="UniProt"/>
</dbReference>
<dbReference type="GO" id="GO:0006486">
    <property type="term" value="P:protein glycosylation"/>
    <property type="evidence" value="ECO:0007669"/>
    <property type="project" value="InterPro"/>
</dbReference>
<dbReference type="FunFam" id="3.90.550.10:FF:000033">
    <property type="entry name" value="Exostosin-like glycosyltransferase 3"/>
    <property type="match status" value="1"/>
</dbReference>
<dbReference type="Gene3D" id="3.90.550.10">
    <property type="entry name" value="Spore Coat Polysaccharide Biosynthesis Protein SpsA, Chain A"/>
    <property type="match status" value="1"/>
</dbReference>
<dbReference type="InterPro" id="IPR004263">
    <property type="entry name" value="Exostosin"/>
</dbReference>
<dbReference type="InterPro" id="IPR040911">
    <property type="entry name" value="Exostosin_GT47"/>
</dbReference>
<dbReference type="InterPro" id="IPR015338">
    <property type="entry name" value="GT64_dom"/>
</dbReference>
<dbReference type="InterPro" id="IPR029044">
    <property type="entry name" value="Nucleotide-diphossugar_trans"/>
</dbReference>
<dbReference type="PANTHER" id="PTHR48261">
    <property type="entry name" value="ACETYLGLUCOSAMINYLTRANSFERASE"/>
    <property type="match status" value="1"/>
</dbReference>
<dbReference type="PANTHER" id="PTHR48261:SF4">
    <property type="entry name" value="EXOSTOSIN LIKE GLYCOSYLTRANSFERASE 3"/>
    <property type="match status" value="1"/>
</dbReference>
<dbReference type="Pfam" id="PF03016">
    <property type="entry name" value="Exostosin_GT47"/>
    <property type="match status" value="1"/>
</dbReference>
<dbReference type="Pfam" id="PF09258">
    <property type="entry name" value="Glyco_transf_64"/>
    <property type="match status" value="1"/>
</dbReference>
<dbReference type="SUPFAM" id="SSF53448">
    <property type="entry name" value="Nucleotide-diphospho-sugar transferases"/>
    <property type="match status" value="1"/>
</dbReference>
<proteinExistence type="evidence at protein level"/>
<comment type="function">
    <text evidence="2 5 7 9 10 14">Glycosyltransferase which regulates the biosynthesis of heparan sulfate (HS) (PubMed:28132690, PubMed:28148688). Initiates HS synthesis by transferring the first N-acetyl-alpha-D-glucosamine (alpha-GlcNAc) residue (GlcNAcT-I activity) to the tetrasaccharide linker (GlcA-Gal-Gal-Xyl-)Ser core linker (PubMed:11390981, PubMed:35676258). May also transfer alpha-GlcNAc residues during HS elongation (GlcNAcT-II activity) (PubMed:11390981, PubMed:35676258). Lacks glucuronyl transferase II (GlcAT-II) activity (PubMed:11390981, PubMed:35676258). Important for both skeletal development and hematopoiesis, through the formation of HS proteoglycans (HSPGs) (PubMed:11390981, PubMed:22727489, PubMed:28132690, PubMed:28148688, PubMed:35676258). Through the synthesis of HS, regulates postnatal pancreatic islet maturation and insulin secretion (By similarity).</text>
</comment>
<comment type="function">
    <text evidence="2 6 7 8 13">Receptor for REG3A, REG3B and REG3G, induces the activation of downstream signaling pathways such as PI3K-AKT or RAS-RAF-MEK-ERK signaling pathway (PubMed:22727489, PubMed:27830702, PubMed:34099862). Required for the function of REG3A in regulating keratinocyte proliferation and differentiation (PubMed:22727489). Required for the inhibition of skin inflammation mediated by REG3A through the activation of PI3K-AKT-STAT3 pathway (PubMed:27830702). Required for the function of REG3A and REG3G in glucose tolerance in pancreas (PubMed:19158046). Expressed in microglia, is activated by nociceptor-derived REG3G in response to endotoxins, leading to the inhibition of kynurenine pathway to prevent endotoxic death (By similarity).</text>
</comment>
<comment type="catalytic activity">
    <reaction evidence="5 14 21 22">
        <text>3-O-(beta-D-GlcA-(1-&gt;3)-beta-D-Gal-(1-&gt;3)-beta-D-Gal-(1-&gt;4)-beta-D-Xyl)-L-seryl-[protein] + UDP-N-acetyl-alpha-D-glucosamine = 3-O-(alpha-D-GlcNAc-(1-&gt;4)-beta-D-GlcA-(1-&gt;3)-beta-D-Gal-(1-&gt;3)-beta-D-Gal-(1-&gt;4)-beta-D-Xyl)-L-seryl-[protein] + UDP + H(+)</text>
        <dbReference type="Rhea" id="RHEA:16221"/>
        <dbReference type="Rhea" id="RHEA-COMP:12573"/>
        <dbReference type="Rhea" id="RHEA-COMP:12574"/>
        <dbReference type="ChEBI" id="CHEBI:15378"/>
        <dbReference type="ChEBI" id="CHEBI:57705"/>
        <dbReference type="ChEBI" id="CHEBI:58223"/>
        <dbReference type="ChEBI" id="CHEBI:132093"/>
        <dbReference type="ChEBI" id="CHEBI:132104"/>
        <dbReference type="EC" id="2.4.1.223"/>
    </reaction>
</comment>
<comment type="cofactor">
    <cofactor evidence="1">
        <name>Mn(2+)</name>
        <dbReference type="ChEBI" id="CHEBI:29035"/>
    </cofactor>
</comment>
<comment type="pathway">
    <text evidence="9 10">Glycan metabolism; heparan sulfate biosynthesis.</text>
</comment>
<comment type="subunit">
    <text evidence="7 12 14">Homodimer; disulfide-linked (PubMed:29346724, PubMed:35676258). Interacts with REG3A.</text>
</comment>
<comment type="interaction">
    <interactant intactId="EBI-1754679">
        <id>O43909</id>
    </interactant>
    <interactant intactId="EBI-930964">
        <id>P54253</id>
        <label>ATXN1</label>
    </interactant>
    <organismsDiffer>false</organismsDiffer>
    <experiments>3</experiments>
</comment>
<comment type="subcellular location">
    <subcellularLocation>
        <location evidence="4">Endoplasmic reticulum membrane</location>
        <topology evidence="4">Single-pass type II membrane protein</topology>
    </subcellularLocation>
    <subcellularLocation>
        <location evidence="9">Golgi apparatus</location>
    </subcellularLocation>
    <subcellularLocation>
        <location evidence="6">Cell membrane</location>
    </subcellularLocation>
    <subcellularLocation>
        <location evidence="6">Nucleus</location>
    </subcellularLocation>
    <text evidence="6">Interaction with REG3A induces its translocation to the nucleus.</text>
</comment>
<comment type="tissue specificity">
    <text evidence="7 13">Ubiquitous. Expressed in keratinocytes. Expressed in pancreas (PubMed:34099862).</text>
</comment>
<comment type="domain">
    <text evidence="14">The N-terminal glycosyltransferase domain (GT47) does not bind UDP and is therefore unlikely to possess glycosyltransferase activity.</text>
</comment>
<comment type="disease" evidence="9 10">
    <disease id="DI-04990">
        <name>Immunoskeletal dysplasia with neurodevelopmental abnormalities</name>
        <acronym>ISDNA</acronym>
        <description>An autosomal recessive disorder characterized by variable skeletal abnormalities and neurodevelopmental defects. Neurologic manifestations include intellectual disability and motor delay. Some patients manifest hypotonia and seizures. Skeletal features include disproportionate short stature, cervical malformations, epiphyseal and metaphyseal dysplasia, and rarely premature craniosynostosis with progressive microcephaly. Severe combined immunodeficiency with a complete absence of T cells is observed in some patients.</description>
        <dbReference type="MIM" id="617425"/>
    </disease>
    <text>The disease is caused by variants affecting the gene represented in this entry.</text>
</comment>
<comment type="similarity">
    <text evidence="20">Belongs to the glycosyltransferase 47 family.</text>
</comment>
<comment type="caution">
    <text evidence="20">It is uncertain whether Met-1, Met-6 or Met-20 is the initiator.</text>
</comment>
<comment type="sequence caution" evidence="20">
    <conflict type="erroneous initiation">
        <sequence resource="EMBL-CDS" id="BAA25445"/>
    </conflict>
    <text>Extended N-terminus.</text>
</comment>
<comment type="online information" name="Functional Glycomics Gateway - GTase">
    <link uri="http://www.functionalglycomics.org/glycomics/molecule/jsp/glycoEnzyme/viewGlycoEnzyme.jsp?gbpId=gt_hum_531"/>
    <text>Exostosin-like 3</text>
</comment>
<accession>O43909</accession>
<accession>D3DST8</accession>
<accession>O00225</accession>
<accession>Q53XT3</accession>
<gene>
    <name evidence="15 23" type="primary">EXTL3</name>
    <name type="synonym">EXTL1L</name>
    <name type="synonym">EXTR1</name>
    <name type="synonym">KIAA0519</name>
</gene>
<organism>
    <name type="scientific">Homo sapiens</name>
    <name type="common">Human</name>
    <dbReference type="NCBI Taxonomy" id="9606"/>
    <lineage>
        <taxon>Eukaryota</taxon>
        <taxon>Metazoa</taxon>
        <taxon>Chordata</taxon>
        <taxon>Craniata</taxon>
        <taxon>Vertebrata</taxon>
        <taxon>Euteleostomi</taxon>
        <taxon>Mammalia</taxon>
        <taxon>Eutheria</taxon>
        <taxon>Euarchontoglires</taxon>
        <taxon>Primates</taxon>
        <taxon>Haplorrhini</taxon>
        <taxon>Catarrhini</taxon>
        <taxon>Hominidae</taxon>
        <taxon>Homo</taxon>
    </lineage>
</organism>
<sequence length="919" mass="104749">MTGYTMLRNGGAGNGGQTCMLRWSNRIRLTWLSFTLFVILVFFPLIAHYYLTTLDEADEAGKRIFGPRVGNELCEVKHVLDLCRIRESVSEELLQLEAKRQELNSEIAKLNLKIEACKKSIENAKQDLLQLKNVISQTEHSYKELMAQNQPKLSLPIRLLPEKDDAGLPPPKATRGCRLHNCFDYSRCPLTSGFPVYVYDSDQFVFGSYLDPLVKQAFQATARANVYVTENADIACLYVILVGEMQEPVVLRPAELEKQLYSLPHWRTDGHNHVIINLSRKSDTQNLLYNVSTGRAMVAQSTFYTVQYRPGFDLVVSPLVHAMSEPNFMEIPPQVPVKRKYLFTFQGEKIESLRSSLQEARSFEEEMEGDPPADYDDRIIATLKAVQDSKLDQVLVEFTCKNQPKPSLPTEWALCGEREDRLELLKLSTFALIITPGDPRLVISSGCATRLFEALEVGAVPVVLGEQVQLPYQDMLQWNEAALVVPKPRVTEVHFLLRSLSDSDLLAMRRQGRFLWETYFSTADSIFNTVLAMIRTRIQIPAAPIREEAAAEIPHRSGKAAGTDPNMADNGDLDLGPVETEPPYASPRYLRNFTLTVTDFYRSWNCAPGPFHLFPHTPFDPVLPSEAKFLGSGTGFRPIGGGAGGSGKEFQAALGGNVPREQFTVVMLTYEREEVLMNSLERLNGLPYLNKVVVVWNSPKLPSEDLLWPDIGVPIMVVRTEKNSLNNRFLPWNEIETEAILSIDDDAHLRHDEIMFGFRVWREARDRIVGFPGRYHAWDIPHQSWLYNSNYSCELSMVLTGAAFFHKYYAYLYSYVMPQAIRDMVDEYINCEDIAMNFLVSHITRKPPIKVTSRWTFRCPGCPQALSHDDSHFHERHKCINFFVKVYGYMPLLYTQFRVDSVLFKTRLPHDKTKCFKFI</sequence>
<keyword id="KW-0002">3D-structure</keyword>
<keyword id="KW-1003">Cell membrane</keyword>
<keyword id="KW-0225">Disease variant</keyword>
<keyword id="KW-1015">Disulfide bond</keyword>
<keyword id="KW-0242">Dwarfism</keyword>
<keyword id="KW-0256">Endoplasmic reticulum</keyword>
<keyword id="KW-0325">Glycoprotein</keyword>
<keyword id="KW-0328">Glycosyltransferase</keyword>
<keyword id="KW-0333">Golgi apparatus</keyword>
<keyword id="KW-0991">Intellectual disability</keyword>
<keyword id="KW-0464">Manganese</keyword>
<keyword id="KW-0472">Membrane</keyword>
<keyword id="KW-0479">Metal-binding</keyword>
<keyword id="KW-0539">Nucleus</keyword>
<keyword id="KW-0597">Phosphoprotein</keyword>
<keyword id="KW-1267">Proteomics identification</keyword>
<keyword id="KW-0675">Receptor</keyword>
<keyword id="KW-1185">Reference proteome</keyword>
<keyword id="KW-0735">Signal-anchor</keyword>
<keyword id="KW-0808">Transferase</keyword>
<keyword id="KW-0812">Transmembrane</keyword>
<keyword id="KW-1133">Transmembrane helix</keyword>
<reference key="1">
    <citation type="journal article" date="1998" name="Genomics">
        <title>Identification of a third EXT-like gene (EXTL3) belonging to the EXT gene family.</title>
        <authorList>
            <person name="van Hul W."/>
            <person name="Wuyts W."/>
            <person name="Hendrickx J."/>
            <person name="Speleman F."/>
            <person name="Wauters J."/>
            <person name="de Boulle K."/>
            <person name="van Roy N."/>
            <person name="Bossuyt P."/>
            <person name="Willems P.J."/>
        </authorList>
    </citation>
    <scope>NUCLEOTIDE SEQUENCE [MRNA]</scope>
</reference>
<reference key="2">
    <citation type="journal article" date="1998" name="Biochem. Biophys. Res. Commun.">
        <title>Structure, chromosomal location, and expression profile of EXTR1 and EXTR2, new members of the multiple exostoses gene family.</title>
        <authorList>
            <person name="Saito T."/>
            <person name="Seki N."/>
            <person name="Yamauchi M."/>
            <person name="Tsuji S."/>
            <person name="Hayashi A."/>
            <person name="Kozuma S."/>
            <person name="Hori T.-A."/>
        </authorList>
    </citation>
    <scope>NUCLEOTIDE SEQUENCE [MRNA]</scope>
    <source>
        <tissue>Fetus</tissue>
        <tissue>Testis</tissue>
    </source>
</reference>
<reference key="3">
    <citation type="journal article" date="1998" name="DNA Res.">
        <title>Prediction of the coding sequences of unidentified human genes. IX. The complete sequences of 100 new cDNA clones from brain which can code for large proteins in vitro.</title>
        <authorList>
            <person name="Nagase T."/>
            <person name="Ishikawa K."/>
            <person name="Miyajima N."/>
            <person name="Tanaka A."/>
            <person name="Kotani H."/>
            <person name="Nomura N."/>
            <person name="Ohara O."/>
        </authorList>
    </citation>
    <scope>NUCLEOTIDE SEQUENCE [LARGE SCALE MRNA]</scope>
    <source>
        <tissue>Brain</tissue>
    </source>
</reference>
<reference key="4">
    <citation type="submission" date="1997-10" db="EMBL/GenBank/DDBJ databases">
        <title>Molecular cloning of a candidate gene for multiple exostoses.</title>
        <authorList>
            <person name="Deng H.-X."/>
            <person name="Xu L."/>
            <person name="Xia J.-H."/>
            <person name="Fan C."/>
            <person name="Pan Q."/>
            <person name="Liu C.-Y."/>
            <person name="Ruan Q.-G."/>
        </authorList>
    </citation>
    <scope>NUCLEOTIDE SEQUENCE [MRNA]</scope>
</reference>
<reference key="5">
    <citation type="submission" date="1998-08" db="EMBL/GenBank/DDBJ databases">
        <title>The human EXTL1L/EXTR1/EXTL3 gene at 8p11-p12, the third breast cancer susceptibility gene locus, is not mutated in breast and various cancers.</title>
        <authorList>
            <person name="Sato T."/>
        </authorList>
    </citation>
    <scope>NUCLEOTIDE SEQUENCE [MRNA]</scope>
</reference>
<reference key="6">
    <citation type="submission" date="2003-05" db="EMBL/GenBank/DDBJ databases">
        <title>Cloning of human full-length CDSs in BD Creator(TM) system donor vector.</title>
        <authorList>
            <person name="Kalnine N."/>
            <person name="Chen X."/>
            <person name="Rolfs A."/>
            <person name="Halleck A."/>
            <person name="Hines L."/>
            <person name="Eisenstein S."/>
            <person name="Koundinya M."/>
            <person name="Raphael J."/>
            <person name="Moreira D."/>
            <person name="Kelley T."/>
            <person name="LaBaer J."/>
            <person name="Lin Y."/>
            <person name="Phelan M."/>
            <person name="Farmer A."/>
        </authorList>
    </citation>
    <scope>NUCLEOTIDE SEQUENCE [LARGE SCALE MRNA]</scope>
</reference>
<reference key="7">
    <citation type="submission" date="2005-09" db="EMBL/GenBank/DDBJ databases">
        <authorList>
            <person name="Mural R.J."/>
            <person name="Istrail S."/>
            <person name="Sutton G.G."/>
            <person name="Florea L."/>
            <person name="Halpern A.L."/>
            <person name="Mobarry C.M."/>
            <person name="Lippert R."/>
            <person name="Walenz B."/>
            <person name="Shatkay H."/>
            <person name="Dew I."/>
            <person name="Miller J.R."/>
            <person name="Flanigan M.J."/>
            <person name="Edwards N.J."/>
            <person name="Bolanos R."/>
            <person name="Fasulo D."/>
            <person name="Halldorsson B.V."/>
            <person name="Hannenhalli S."/>
            <person name="Turner R."/>
            <person name="Yooseph S."/>
            <person name="Lu F."/>
            <person name="Nusskern D.R."/>
            <person name="Shue B.C."/>
            <person name="Zheng X.H."/>
            <person name="Zhong F."/>
            <person name="Delcher A.L."/>
            <person name="Huson D.H."/>
            <person name="Kravitz S.A."/>
            <person name="Mouchard L."/>
            <person name="Reinert K."/>
            <person name="Remington K.A."/>
            <person name="Clark A.G."/>
            <person name="Waterman M.S."/>
            <person name="Eichler E.E."/>
            <person name="Adams M.D."/>
            <person name="Hunkapiller M.W."/>
            <person name="Myers E.W."/>
            <person name="Venter J.C."/>
        </authorList>
    </citation>
    <scope>NUCLEOTIDE SEQUENCE [LARGE SCALE GENOMIC DNA]</scope>
</reference>
<reference key="8">
    <citation type="journal article" date="2004" name="Genome Res.">
        <title>The status, quality, and expansion of the NIH full-length cDNA project: the Mammalian Gene Collection (MGC).</title>
        <authorList>
            <consortium name="The MGC Project Team"/>
        </authorList>
    </citation>
    <scope>NUCLEOTIDE SEQUENCE [LARGE SCALE MRNA]</scope>
    <source>
        <tissue>Brain</tissue>
    </source>
</reference>
<reference key="9">
    <citation type="submission" date="1997-04" db="EMBL/GenBank/DDBJ databases">
        <title>Human chromosome 8 BAC clone CIT987SK-2A8 complete sequence.</title>
        <authorList>
            <person name="Adams M.D."/>
        </authorList>
    </citation>
    <scope>NUCLEOTIDE SEQUENCE [LARGE SCALE GENOMIC DNA] OF 470-919</scope>
</reference>
<reference key="10">
    <citation type="journal article" date="2000" name="Proc. Natl. Acad. Sci. U.S.A.">
        <title>The putative tumor suppressors EXT1 and EXT2 form a stable complex that accumulates in the Golgi apparatus and catalyzes the synthesis of heparan sulfate.</title>
        <authorList>
            <person name="McCormick C."/>
            <person name="Duncan G."/>
            <person name="Goutsos K.T."/>
            <person name="Tufaro F."/>
        </authorList>
    </citation>
    <scope>SUBCELLULAR LOCATION</scope>
</reference>
<reference key="11">
    <citation type="journal article" date="2001" name="Proc. Natl. Acad. Sci. U.S.A.">
        <title>Human tumor suppressor EXT gene family members EXTL1 and EXTL3 encode alpha 1,4- N-acetylglucosaminyltransferases that likely are involved in heparan sulfate/ heparin biosynthesis.</title>
        <authorList>
            <person name="Kim B.T."/>
            <person name="Kitagawa H."/>
            <person name="Tamura J."/>
            <person name="Saito T."/>
            <person name="Kusche-Gullberg M."/>
            <person name="Lindahl U."/>
            <person name="Sugahara K."/>
        </authorList>
    </citation>
    <scope>FUNCTION</scope>
    <scope>CATALYTIC ACTIVITY</scope>
</reference>
<reference key="12">
    <citation type="journal article" date="2008" name="Endocr. Pract.">
        <title>Discovery of a human peptide sequence signaling islet neogenesis.</title>
        <authorList>
            <person name="Levetan C.S."/>
            <person name="Upham L.V."/>
            <person name="Deng S."/>
            <person name="Laury-Kleintop L."/>
            <person name="Kery V."/>
            <person name="Nolan R."/>
            <person name="Quinlan J."/>
            <person name="Torres C."/>
            <person name="El-Hajj R.J."/>
        </authorList>
    </citation>
    <scope>FUNCTION</scope>
    <scope>SUBCELLULAR LOCATION</scope>
</reference>
<reference key="13">
    <citation type="journal article" date="2012" name="Immunity">
        <title>The antimicrobial protein REG3A regulates keratinocyte proliferation and differentiation after skin injury.</title>
        <authorList>
            <person name="Lai Y."/>
            <person name="Li D."/>
            <person name="Li C."/>
            <person name="Muehleisen B."/>
            <person name="Radek K.A."/>
            <person name="Park H.J."/>
            <person name="Jiang Z."/>
            <person name="Li Z."/>
            <person name="Lei H."/>
            <person name="Quan Y."/>
            <person name="Zhang T."/>
            <person name="Wu Y."/>
            <person name="Kotol P."/>
            <person name="Morizane S."/>
            <person name="Hata T.R."/>
            <person name="Iwatsuki K."/>
            <person name="Tang C."/>
            <person name="Gallo R.L."/>
        </authorList>
    </citation>
    <scope>FUNCTION</scope>
    <scope>INTERACTION WITH REG3A</scope>
    <scope>TISSUE SPECIFICITY</scope>
</reference>
<reference key="14">
    <citation type="journal article" date="2016" name="Nat. Commun.">
        <title>Hyperglycaemia inhibits REG3A expression to exacerbate TLR3-mediated skin inflammation in diabetes.</title>
        <authorList>
            <person name="Wu Y."/>
            <person name="Quan Y."/>
            <person name="Liu Y."/>
            <person name="Liu K."/>
            <person name="Li H."/>
            <person name="Jiang Z."/>
            <person name="Zhang T."/>
            <person name="Lei H."/>
            <person name="Radek K.A."/>
            <person name="Li D."/>
            <person name="Wang Z."/>
            <person name="Lu J."/>
            <person name="Wang W."/>
            <person name="Ji S."/>
            <person name="Xia Z."/>
            <person name="Lai Y."/>
        </authorList>
    </citation>
    <scope>FUNCTION</scope>
    <scope>TISSUE SPECIFICITY</scope>
    <scope>REGION</scope>
</reference>
<reference key="15">
    <citation type="journal article" date="2017" name="Am. J. Hum. Genet.">
        <title>Mutations in EXTL3 cause neuro-immuno-skeletal dysplasia syndrome.</title>
        <authorList>
            <person name="Oud M.M."/>
            <person name="Tuijnenburg P."/>
            <person name="Hempel M."/>
            <person name="van Vlies N."/>
            <person name="Ren Z."/>
            <person name="Ferdinandusse S."/>
            <person name="Jansen M.H."/>
            <person name="Santer R."/>
            <person name="Johannsen J."/>
            <person name="Bacchelli C."/>
            <person name="Alders M."/>
            <person name="Li R."/>
            <person name="Davies R."/>
            <person name="Dupuis L."/>
            <person name="Cale C.M."/>
            <person name="Wanders R.J."/>
            <person name="Pals S.T."/>
            <person name="Ocaka L."/>
            <person name="James C."/>
            <person name="Mueller I."/>
            <person name="Lehmberg K."/>
            <person name="Strom T."/>
            <person name="Engels H."/>
            <person name="Williams H.J."/>
            <person name="Beales P."/>
            <person name="Roepman R."/>
            <person name="Dias P."/>
            <person name="Brunner H.G."/>
            <person name="Cobben J.M."/>
            <person name="Hall C."/>
            <person name="Hartley T."/>
            <person name="Le Quesne Stabej P."/>
            <person name="Mendoza-Londono R."/>
            <person name="Davies E.G."/>
            <person name="de Sousa S.B."/>
            <person name="Lessel D."/>
            <person name="Arts H.H."/>
            <person name="Kuijpers T.W."/>
        </authorList>
    </citation>
    <scope>FUNCTION</scope>
    <scope>CATALYTIC ACTIVITY</scope>
    <scope>PATHWAY</scope>
    <scope>SUBCELLULAR LOCATION</scope>
    <scope>INVOLVEMENT IN ISDNA</scope>
    <scope>VARIANTS ISDNA LEU-461; CYS-513; SER-657 AND ASP-670</scope>
    <scope>CHARACTERIZATION OF VARIANTS ISDNA LEU-461; CYS-513; SER-657 AND ASP-670</scope>
    <scope>VARIANT LEU-442</scope>
</reference>
<reference key="16">
    <citation type="journal article" date="2017" name="J. Exp. Med.">
        <title>EXTL3 mutations cause skeletal dysplasia, immune deficiency, and developmental delay.</title>
        <authorList>
            <person name="Volpi S."/>
            <person name="Yamazaki Y."/>
            <person name="Brauer P.M."/>
            <person name="van Rooijen E."/>
            <person name="Hayashida A."/>
            <person name="Slavotinek A."/>
            <person name="Sun Kuehn H."/>
            <person name="Di Rocco M."/>
            <person name="Rivolta C."/>
            <person name="Bortolomai I."/>
            <person name="Du L."/>
            <person name="Felgentreff K."/>
            <person name="Ott de Bruin L."/>
            <person name="Hayashida K."/>
            <person name="Freedman G."/>
            <person name="Marcovecchio G.E."/>
            <person name="Capuder K."/>
            <person name="Rath P."/>
            <person name="Luche N."/>
            <person name="Hagedorn E.J."/>
            <person name="Buoncompagni A."/>
            <person name="Royer-Bertrand B."/>
            <person name="Giliani S."/>
            <person name="Poliani P.L."/>
            <person name="Imberti L."/>
            <person name="Dobbs K."/>
            <person name="Poulain F.E."/>
            <person name="Martini A."/>
            <person name="Manis J."/>
            <person name="Linhardt R.J."/>
            <person name="Bosticardo M."/>
            <person name="Rosenzweig S.D."/>
            <person name="Lee H."/>
            <person name="Puck J.M."/>
            <person name="Zuniga-Pfluecker J.C."/>
            <person name="Zon L."/>
            <person name="Park P.W."/>
            <person name="Superti-Furga A."/>
            <person name="Notarangelo L.D."/>
        </authorList>
    </citation>
    <scope>FUNCTION</scope>
    <scope>CATALYTIC ACTIVITY</scope>
    <scope>PATHWAY</scope>
    <scope>VARIANTS ISDNA TRP-339 AND LEU-461</scope>
    <scope>CHARACTERIZATION OF VARIANTS ISDNA TRP-339 AND LEU-461</scope>
</reference>
<reference key="17">
    <citation type="journal article" date="2018" name="Biochemistry">
        <title>Structural and Biophysical Characterization of Human EXTL3: Domain Organization, Glycosylation, and Solution Structure.</title>
        <authorList>
            <person name="Awad W."/>
            <person name="Kjellstroem S."/>
            <person name="Svensson Birkedal G."/>
            <person name="Mani K."/>
            <person name="Logan D.T."/>
        </authorList>
    </citation>
    <scope>SUBUNIT</scope>
    <scope>GLYCOSYLATION AT ASN-290 AND ASN-592</scope>
    <scope>DISULFIDE BOND</scope>
</reference>
<reference key="18">
    <citation type="journal article" date="2021" name="Commun. Biol.">
        <title>REG3A/REG3B promotes acinar to ductal metaplasia through binding to EXTL3 and activating the RAS-RAF-MEK-ERK signaling pathway.</title>
        <authorList>
            <person name="Zhang H."/>
            <person name="Corredor A.L.G."/>
            <person name="Messina-Pacheco J."/>
            <person name="Li Q."/>
            <person name="Zogopoulos G."/>
            <person name="Kaddour N."/>
            <person name="Wang Y."/>
            <person name="Shi B.Y."/>
            <person name="Gregorieff A."/>
            <person name="Liu J.L."/>
            <person name="Gao Z.H."/>
        </authorList>
    </citation>
    <scope>FUNCTION</scope>
    <scope>TISSUE SPECIFICITY</scope>
</reference>
<reference evidence="25 26" key="19">
    <citation type="journal article" date="2022" name="Nat. Commun.">
        <title>The structure of EXTL3 helps to explain the different roles of bi-domain exostosins in heparan sulfate synthesis.</title>
        <authorList>
            <person name="Wilson L.F.L."/>
            <person name="Dendooven T."/>
            <person name="Hardwick S.W."/>
            <person name="Echevarria-Poza A."/>
            <person name="Tryfona T."/>
            <person name="Krogh K.B.R.M."/>
            <person name="Chirgadze D.Y."/>
            <person name="Luisi B.F."/>
            <person name="Logan D.T."/>
            <person name="Mani K."/>
            <person name="Dupree P."/>
        </authorList>
    </citation>
    <scope>STRUCTURE BY ELECTRON MICROSCOPY (2.43 ANGSTROMS) OF 51-919 IN APO FORM AND IN COMPLEX WITH UDP AND MANGANESE</scope>
    <scope>FUNCTION</scope>
    <scope>CATALYTIC ACTIVITY</scope>
    <scope>SUBUNIT</scope>
    <scope>DOMAIN</scope>
    <scope>GLYCOSYLATION AT ASN-592 AND ASN-790</scope>
    <scope>DISULFIDE BONDS</scope>
</reference>
<reference key="20">
    <citation type="journal article" date="2018" name="Mol. Psychiatry">
        <title>Mapping autosomal recessive intellectual disability: combined microarray and exome sequencing identifies 26 novel candidate genes in 192 consanguineous families.</title>
        <authorList>
            <person name="Harripaul R."/>
            <person name="Vasli N."/>
            <person name="Mikhailov A."/>
            <person name="Rafiq M.A."/>
            <person name="Mittal K."/>
            <person name="Windpassinger C."/>
            <person name="Sheikh T.I."/>
            <person name="Noor A."/>
            <person name="Mahmood H."/>
            <person name="Downey S."/>
            <person name="Johnson M."/>
            <person name="Vleuten K."/>
            <person name="Bell L."/>
            <person name="Ilyas M."/>
            <person name="Khan F.S."/>
            <person name="Khan V."/>
            <person name="Moradi M."/>
            <person name="Ayaz M."/>
            <person name="Naeem F."/>
            <person name="Heidari A."/>
            <person name="Ahmed I."/>
            <person name="Ghadami S."/>
            <person name="Agha Z."/>
            <person name="Zeinali S."/>
            <person name="Qamar R."/>
            <person name="Mozhdehipanah H."/>
            <person name="John P."/>
            <person name="Mir A."/>
            <person name="Ansar M."/>
            <person name="French L."/>
            <person name="Ayub M."/>
            <person name="Vincent J.B."/>
        </authorList>
    </citation>
    <scope>VARIANT CYS-646</scope>
</reference>
<evidence type="ECO:0000250" key="1">
    <source>
        <dbReference type="UniProtKB" id="Q9ES89"/>
    </source>
</evidence>
<evidence type="ECO:0000250" key="2">
    <source>
        <dbReference type="UniProtKB" id="Q9WVL6"/>
    </source>
</evidence>
<evidence type="ECO:0000255" key="3"/>
<evidence type="ECO:0000269" key="4">
    <source>
    </source>
</evidence>
<evidence type="ECO:0000269" key="5">
    <source>
    </source>
</evidence>
<evidence type="ECO:0000269" key="6">
    <source>
    </source>
</evidence>
<evidence type="ECO:0000269" key="7">
    <source>
    </source>
</evidence>
<evidence type="ECO:0000269" key="8">
    <source>
    </source>
</evidence>
<evidence type="ECO:0000269" key="9">
    <source>
    </source>
</evidence>
<evidence type="ECO:0000269" key="10">
    <source>
    </source>
</evidence>
<evidence type="ECO:0000269" key="11">
    <source>
    </source>
</evidence>
<evidence type="ECO:0000269" key="12">
    <source>
    </source>
</evidence>
<evidence type="ECO:0000269" key="13">
    <source>
    </source>
</evidence>
<evidence type="ECO:0000269" key="14">
    <source>
    </source>
</evidence>
<evidence type="ECO:0000303" key="15">
    <source>
    </source>
</evidence>
<evidence type="ECO:0000303" key="16">
    <source>
    </source>
</evidence>
<evidence type="ECO:0000303" key="17">
    <source>
    </source>
</evidence>
<evidence type="ECO:0000303" key="18">
    <source ref="6"/>
</evidence>
<evidence type="ECO:0000303" key="19">
    <source ref="9"/>
</evidence>
<evidence type="ECO:0000305" key="20"/>
<evidence type="ECO:0000305" key="21">
    <source>
    </source>
</evidence>
<evidence type="ECO:0000305" key="22">
    <source>
    </source>
</evidence>
<evidence type="ECO:0000312" key="23">
    <source>
        <dbReference type="HGNC" id="HGNC:3518"/>
    </source>
</evidence>
<evidence type="ECO:0000312" key="24">
    <source>
        <dbReference type="PDB" id="7AUA"/>
    </source>
</evidence>
<evidence type="ECO:0007744" key="25">
    <source>
        <dbReference type="PDB" id="7AU2"/>
    </source>
</evidence>
<evidence type="ECO:0007744" key="26">
    <source>
        <dbReference type="PDB" id="7AUA"/>
    </source>
</evidence>
<evidence type="ECO:0007829" key="27">
    <source>
        <dbReference type="PDB" id="7AU2"/>
    </source>
</evidence>
<evidence type="ECO:0007829" key="28">
    <source>
        <dbReference type="PDB" id="7AUA"/>
    </source>
</evidence>
<evidence type="ECO:0007829" key="29">
    <source>
        <dbReference type="PDB" id="8OG1"/>
    </source>
</evidence>
<evidence type="ECO:0007829" key="30">
    <source>
        <dbReference type="PDB" id="8OG4"/>
    </source>
</evidence>
<name>EXTL3_HUMAN</name>